<evidence type="ECO:0000250" key="1"/>
<evidence type="ECO:0000305" key="2"/>
<reference key="1">
    <citation type="journal article" date="2005" name="Nature">
        <title>The genome of the social amoeba Dictyostelium discoideum.</title>
        <authorList>
            <person name="Eichinger L."/>
            <person name="Pachebat J.A."/>
            <person name="Gloeckner G."/>
            <person name="Rajandream M.A."/>
            <person name="Sucgang R."/>
            <person name="Berriman M."/>
            <person name="Song J."/>
            <person name="Olsen R."/>
            <person name="Szafranski K."/>
            <person name="Xu Q."/>
            <person name="Tunggal B."/>
            <person name="Kummerfeld S."/>
            <person name="Madera M."/>
            <person name="Konfortov B.A."/>
            <person name="Rivero F."/>
            <person name="Bankier A.T."/>
            <person name="Lehmann R."/>
            <person name="Hamlin N."/>
            <person name="Davies R."/>
            <person name="Gaudet P."/>
            <person name="Fey P."/>
            <person name="Pilcher K."/>
            <person name="Chen G."/>
            <person name="Saunders D."/>
            <person name="Sodergren E.J."/>
            <person name="Davis P."/>
            <person name="Kerhornou A."/>
            <person name="Nie X."/>
            <person name="Hall N."/>
            <person name="Anjard C."/>
            <person name="Hemphill L."/>
            <person name="Bason N."/>
            <person name="Farbrother P."/>
            <person name="Desany B."/>
            <person name="Just E."/>
            <person name="Morio T."/>
            <person name="Rost R."/>
            <person name="Churcher C.M."/>
            <person name="Cooper J."/>
            <person name="Haydock S."/>
            <person name="van Driessche N."/>
            <person name="Cronin A."/>
            <person name="Goodhead I."/>
            <person name="Muzny D.M."/>
            <person name="Mourier T."/>
            <person name="Pain A."/>
            <person name="Lu M."/>
            <person name="Harper D."/>
            <person name="Lindsay R."/>
            <person name="Hauser H."/>
            <person name="James K.D."/>
            <person name="Quiles M."/>
            <person name="Madan Babu M."/>
            <person name="Saito T."/>
            <person name="Buchrieser C."/>
            <person name="Wardroper A."/>
            <person name="Felder M."/>
            <person name="Thangavelu M."/>
            <person name="Johnson D."/>
            <person name="Knights A."/>
            <person name="Loulseged H."/>
            <person name="Mungall K.L."/>
            <person name="Oliver K."/>
            <person name="Price C."/>
            <person name="Quail M.A."/>
            <person name="Urushihara H."/>
            <person name="Hernandez J."/>
            <person name="Rabbinowitsch E."/>
            <person name="Steffen D."/>
            <person name="Sanders M."/>
            <person name="Ma J."/>
            <person name="Kohara Y."/>
            <person name="Sharp S."/>
            <person name="Simmonds M.N."/>
            <person name="Spiegler S."/>
            <person name="Tivey A."/>
            <person name="Sugano S."/>
            <person name="White B."/>
            <person name="Walker D."/>
            <person name="Woodward J.R."/>
            <person name="Winckler T."/>
            <person name="Tanaka Y."/>
            <person name="Shaulsky G."/>
            <person name="Schleicher M."/>
            <person name="Weinstock G.M."/>
            <person name="Rosenthal A."/>
            <person name="Cox E.C."/>
            <person name="Chisholm R.L."/>
            <person name="Gibbs R.A."/>
            <person name="Loomis W.F."/>
            <person name="Platzer M."/>
            <person name="Kay R.R."/>
            <person name="Williams J.G."/>
            <person name="Dear P.H."/>
            <person name="Noegel A.A."/>
            <person name="Barrell B.G."/>
            <person name="Kuspa A."/>
        </authorList>
    </citation>
    <scope>NUCLEOTIDE SEQUENCE [LARGE SCALE GENOMIC DNA]</scope>
    <source>
        <strain>AX4</strain>
    </source>
</reference>
<dbReference type="EMBL" id="AAFI02000040">
    <property type="protein sequence ID" value="EAL66860.1"/>
    <property type="molecule type" value="Genomic_DNA"/>
</dbReference>
<dbReference type="EMBL" id="AAFI02000040">
    <property type="protein sequence ID" value="EAL66861.1"/>
    <property type="status" value="ALT_SEQ"/>
    <property type="molecule type" value="Genomic_DNA"/>
</dbReference>
<dbReference type="RefSeq" id="XP_640833.1">
    <property type="nucleotide sequence ID" value="XM_635741.1"/>
</dbReference>
<dbReference type="RefSeq" id="XP_640834.1">
    <property type="nucleotide sequence ID" value="XM_635742.1"/>
</dbReference>
<dbReference type="SMR" id="Q54UE3"/>
<dbReference type="STRING" id="44689.Q54UE3"/>
<dbReference type="PaxDb" id="44689-DDB0204031"/>
<dbReference type="EnsemblProtists" id="EAL66860">
    <property type="protein sequence ID" value="EAL66860"/>
    <property type="gene ID" value="DDB_G0281127"/>
</dbReference>
<dbReference type="EnsemblProtists" id="EAL66861">
    <property type="protein sequence ID" value="EAL66861"/>
    <property type="gene ID" value="DDB_G0281129"/>
</dbReference>
<dbReference type="GeneID" id="8622888"/>
<dbReference type="KEGG" id="ddi:DDB_G0281127"/>
<dbReference type="KEGG" id="ddi:DDB_G0281129"/>
<dbReference type="VEuPathDB" id="AmoebaDB:DDB_G0281127"/>
<dbReference type="eggNOG" id="ENOG502QU0C">
    <property type="taxonomic scope" value="Eukaryota"/>
</dbReference>
<dbReference type="HOGENOM" id="CLU_1573535_0_0_1"/>
<dbReference type="InParanoid" id="Q54UE3"/>
<dbReference type="Proteomes" id="UP000002195">
    <property type="component" value="Chromosome 3"/>
</dbReference>
<dbReference type="GO" id="GO:0016829">
    <property type="term" value="F:lyase activity"/>
    <property type="evidence" value="ECO:0007669"/>
    <property type="project" value="InterPro"/>
</dbReference>
<dbReference type="GO" id="GO:0006520">
    <property type="term" value="P:amino acid metabolic process"/>
    <property type="evidence" value="ECO:0007669"/>
    <property type="project" value="InterPro"/>
</dbReference>
<dbReference type="Gene3D" id="3.90.1150.10">
    <property type="entry name" value="Aspartate Aminotransferase, domain 1"/>
    <property type="match status" value="1"/>
</dbReference>
<dbReference type="InterPro" id="IPR001597">
    <property type="entry name" value="ArAA_b-elim_lyase/Thr_aldolase"/>
</dbReference>
<dbReference type="InterPro" id="IPR015424">
    <property type="entry name" value="PyrdxlP-dep_Trfase"/>
</dbReference>
<dbReference type="InterPro" id="IPR015422">
    <property type="entry name" value="PyrdxlP-dep_Trfase_small"/>
</dbReference>
<dbReference type="PANTHER" id="PTHR32325">
    <property type="entry name" value="BETA-ELIMINATING LYASE-LIKE PROTEIN-RELATED"/>
    <property type="match status" value="1"/>
</dbReference>
<dbReference type="PANTHER" id="PTHR32325:SF4">
    <property type="entry name" value="TRYPTOPHANASE"/>
    <property type="match status" value="1"/>
</dbReference>
<dbReference type="Pfam" id="PF01212">
    <property type="entry name" value="Beta_elim_lyase"/>
    <property type="match status" value="1"/>
</dbReference>
<dbReference type="SUPFAM" id="SSF53383">
    <property type="entry name" value="PLP-dependent transferases"/>
    <property type="match status" value="1"/>
</dbReference>
<keyword id="KW-0663">Pyridoxal phosphate</keyword>
<keyword id="KW-1185">Reference proteome</keyword>
<proteinExistence type="uncertain"/>
<feature type="chain" id="PRO_0000330816" description="Putative beta-eliminating lyase-like protein">
    <location>
        <begin position="1"/>
        <end position="170"/>
    </location>
</feature>
<feature type="modified residue" description="N6-(pyridoxal phosphate)lysine" evidence="1">
    <location>
        <position position="32"/>
    </location>
</feature>
<accession>Q54UE3</accession>
<accession>Q54UE2</accession>
<organism>
    <name type="scientific">Dictyostelium discoideum</name>
    <name type="common">Social amoeba</name>
    <dbReference type="NCBI Taxonomy" id="44689"/>
    <lineage>
        <taxon>Eukaryota</taxon>
        <taxon>Amoebozoa</taxon>
        <taxon>Evosea</taxon>
        <taxon>Eumycetozoa</taxon>
        <taxon>Dictyostelia</taxon>
        <taxon>Dictyosteliales</taxon>
        <taxon>Dictyosteliaceae</taxon>
        <taxon>Dictyostelium</taxon>
    </lineage>
</organism>
<name>BELYL_DICDI</name>
<sequence>MSGESGFKNKSISEIVKEIYENIDGMTMSGKKDGNSNIGGFIATRHKEWYDKASIVNIIYEGYVTYGGMTGRDMGAMAQGLNESMDFEYLKSRCKQVEYLANKLDKYGVPFQRPFGEHALFIDAKKILGHIPIDDLIAQTLAIEIYLEGGVGSVEIGTLLADRDPITQEN</sequence>
<gene>
    <name type="ORF">DDB_G0281127</name>
</gene>
<protein>
    <recommendedName>
        <fullName>Putative beta-eliminating lyase-like protein</fullName>
    </recommendedName>
</protein>
<comment type="cofactor">
    <cofactor evidence="1">
        <name>pyridoxal 5'-phosphate</name>
        <dbReference type="ChEBI" id="CHEBI:597326"/>
    </cofactor>
</comment>
<comment type="similarity">
    <text evidence="2">Belongs to the beta-eliminating lyase family.</text>
</comment>
<comment type="caution">
    <text evidence="2">Could be the product of a pseudogene. This putative protein corresponds to the central region of bacterial and Trichomonas vaginalis beta-eliminating lyase-like protein and could have been acquired by horizontal transfer.</text>
</comment>
<comment type="sequence caution" evidence="2">
    <conflict type="erroneous gene model prediction">
        <sequence resource="EMBL-CDS" id="EAL66861"/>
    </conflict>
</comment>